<accession>Q6MJ11</accession>
<keyword id="KW-0488">Methylation</keyword>
<keyword id="KW-1185">Reference proteome</keyword>
<keyword id="KW-0687">Ribonucleoprotein</keyword>
<keyword id="KW-0689">Ribosomal protein</keyword>
<keyword id="KW-0694">RNA-binding</keyword>
<keyword id="KW-0699">rRNA-binding</keyword>
<keyword id="KW-0820">tRNA-binding</keyword>
<protein>
    <recommendedName>
        <fullName evidence="2">Small ribosomal subunit protein uS12</fullName>
    </recommendedName>
    <alternativeName>
        <fullName evidence="4">30S ribosomal protein S12</fullName>
    </alternativeName>
</protein>
<sequence>MPTINQLIKSERTVQKNQTKSPALDSCPQRRGVCTRVYTTTPKKPNSALRKVAKVRLSNGFEVISYIPGIGHNLQEHSVVLIRGGRVKDLPGVRYHIVRGVLDLQGVNGRLRARSKYGTKRPKK</sequence>
<comment type="function">
    <text evidence="2">With S4 and S5 plays an important role in translational accuracy.</text>
</comment>
<comment type="function">
    <text evidence="2">Interacts with and stabilizes bases of the 16S rRNA that are involved in tRNA selection in the A site and with the mRNA backbone. Located at the interface of the 30S and 50S subunits, it traverses the body of the 30S subunit contacting proteins on the other side and probably holding the rRNA structure together. The combined cluster of proteins S8, S12 and S17 appears to hold together the shoulder and platform of the 30S subunit.</text>
</comment>
<comment type="subunit">
    <text evidence="2">Part of the 30S ribosomal subunit. Contacts proteins S8 and S17. May interact with IF1 in the 30S initiation complex.</text>
</comment>
<comment type="similarity">
    <text evidence="2">Belongs to the universal ribosomal protein uS12 family.</text>
</comment>
<organism>
    <name type="scientific">Bdellovibrio bacteriovorus (strain ATCC 15356 / DSM 50701 / NCIMB 9529 / HD100)</name>
    <dbReference type="NCBI Taxonomy" id="264462"/>
    <lineage>
        <taxon>Bacteria</taxon>
        <taxon>Pseudomonadati</taxon>
        <taxon>Bdellovibrionota</taxon>
        <taxon>Bdellovibrionia</taxon>
        <taxon>Bdellovibrionales</taxon>
        <taxon>Pseudobdellovibrionaceae</taxon>
        <taxon>Bdellovibrio</taxon>
    </lineage>
</organism>
<evidence type="ECO:0000250" key="1"/>
<evidence type="ECO:0000255" key="2">
    <source>
        <dbReference type="HAMAP-Rule" id="MF_00403"/>
    </source>
</evidence>
<evidence type="ECO:0000256" key="3">
    <source>
        <dbReference type="SAM" id="MobiDB-lite"/>
    </source>
</evidence>
<evidence type="ECO:0000305" key="4"/>
<feature type="chain" id="PRO_0000146182" description="Small ribosomal subunit protein uS12">
    <location>
        <begin position="1"/>
        <end position="124"/>
    </location>
</feature>
<feature type="region of interest" description="Disordered" evidence="3">
    <location>
        <begin position="9"/>
        <end position="28"/>
    </location>
</feature>
<feature type="modified residue" description="3-methylthioaspartic acid" evidence="1">
    <location>
        <position position="89"/>
    </location>
</feature>
<dbReference type="EMBL" id="BX842654">
    <property type="protein sequence ID" value="CAE80752.1"/>
    <property type="molecule type" value="Genomic_DNA"/>
</dbReference>
<dbReference type="RefSeq" id="WP_011165356.1">
    <property type="nucleotide sequence ID" value="NC_005363.1"/>
</dbReference>
<dbReference type="SMR" id="Q6MJ11"/>
<dbReference type="STRING" id="264462.Bd2981"/>
<dbReference type="GeneID" id="93013843"/>
<dbReference type="KEGG" id="bba:Bd2981"/>
<dbReference type="eggNOG" id="COG0048">
    <property type="taxonomic scope" value="Bacteria"/>
</dbReference>
<dbReference type="HOGENOM" id="CLU_104295_1_2_7"/>
<dbReference type="Proteomes" id="UP000008080">
    <property type="component" value="Chromosome"/>
</dbReference>
<dbReference type="GO" id="GO:0015935">
    <property type="term" value="C:small ribosomal subunit"/>
    <property type="evidence" value="ECO:0007669"/>
    <property type="project" value="InterPro"/>
</dbReference>
<dbReference type="GO" id="GO:0019843">
    <property type="term" value="F:rRNA binding"/>
    <property type="evidence" value="ECO:0007669"/>
    <property type="project" value="UniProtKB-UniRule"/>
</dbReference>
<dbReference type="GO" id="GO:0003735">
    <property type="term" value="F:structural constituent of ribosome"/>
    <property type="evidence" value="ECO:0007669"/>
    <property type="project" value="InterPro"/>
</dbReference>
<dbReference type="GO" id="GO:0000049">
    <property type="term" value="F:tRNA binding"/>
    <property type="evidence" value="ECO:0007669"/>
    <property type="project" value="UniProtKB-UniRule"/>
</dbReference>
<dbReference type="GO" id="GO:0006412">
    <property type="term" value="P:translation"/>
    <property type="evidence" value="ECO:0007669"/>
    <property type="project" value="UniProtKB-UniRule"/>
</dbReference>
<dbReference type="CDD" id="cd03368">
    <property type="entry name" value="Ribosomal_S12"/>
    <property type="match status" value="1"/>
</dbReference>
<dbReference type="FunFam" id="2.40.50.140:FF:000001">
    <property type="entry name" value="30S ribosomal protein S12"/>
    <property type="match status" value="1"/>
</dbReference>
<dbReference type="Gene3D" id="2.40.50.140">
    <property type="entry name" value="Nucleic acid-binding proteins"/>
    <property type="match status" value="1"/>
</dbReference>
<dbReference type="HAMAP" id="MF_00403_B">
    <property type="entry name" value="Ribosomal_uS12_B"/>
    <property type="match status" value="1"/>
</dbReference>
<dbReference type="InterPro" id="IPR012340">
    <property type="entry name" value="NA-bd_OB-fold"/>
</dbReference>
<dbReference type="InterPro" id="IPR006032">
    <property type="entry name" value="Ribosomal_uS12"/>
</dbReference>
<dbReference type="InterPro" id="IPR005679">
    <property type="entry name" value="Ribosomal_uS12_bac"/>
</dbReference>
<dbReference type="NCBIfam" id="TIGR00981">
    <property type="entry name" value="rpsL_bact"/>
    <property type="match status" value="1"/>
</dbReference>
<dbReference type="PANTHER" id="PTHR11652">
    <property type="entry name" value="30S RIBOSOMAL PROTEIN S12 FAMILY MEMBER"/>
    <property type="match status" value="1"/>
</dbReference>
<dbReference type="Pfam" id="PF00164">
    <property type="entry name" value="Ribosom_S12_S23"/>
    <property type="match status" value="1"/>
</dbReference>
<dbReference type="PIRSF" id="PIRSF002133">
    <property type="entry name" value="Ribosomal_S12/S23"/>
    <property type="match status" value="1"/>
</dbReference>
<dbReference type="PRINTS" id="PR01034">
    <property type="entry name" value="RIBOSOMALS12"/>
</dbReference>
<dbReference type="SUPFAM" id="SSF50249">
    <property type="entry name" value="Nucleic acid-binding proteins"/>
    <property type="match status" value="1"/>
</dbReference>
<dbReference type="PROSITE" id="PS00055">
    <property type="entry name" value="RIBOSOMAL_S12"/>
    <property type="match status" value="1"/>
</dbReference>
<proteinExistence type="inferred from homology"/>
<reference key="1">
    <citation type="journal article" date="2004" name="Science">
        <title>A predator unmasked: life cycle of Bdellovibrio bacteriovorus from a genomic perspective.</title>
        <authorList>
            <person name="Rendulic S."/>
            <person name="Jagtap P."/>
            <person name="Rosinus A."/>
            <person name="Eppinger M."/>
            <person name="Baar C."/>
            <person name="Lanz C."/>
            <person name="Keller H."/>
            <person name="Lambert C."/>
            <person name="Evans K.J."/>
            <person name="Goesmann A."/>
            <person name="Meyer F."/>
            <person name="Sockett R.E."/>
            <person name="Schuster S.C."/>
        </authorList>
    </citation>
    <scope>NUCLEOTIDE SEQUENCE [LARGE SCALE GENOMIC DNA]</scope>
    <source>
        <strain>ATCC 15356 / DSM 50701 / NCIMB 9529 / HD100</strain>
    </source>
</reference>
<gene>
    <name evidence="2" type="primary">rpsL</name>
    <name type="ordered locus">Bd2981</name>
</gene>
<name>RS12_BDEBA</name>